<reference key="1">
    <citation type="journal article" date="2007" name="BMC Genomics">
        <title>Comparative chloroplast genomics: analyses including new sequences from the angiosperms Nuphar advena and Ranunculus macranthus.</title>
        <authorList>
            <person name="Raubeson L.A."/>
            <person name="Peery R."/>
            <person name="Chumley T.W."/>
            <person name="Dziubek C."/>
            <person name="Fourcade H.M."/>
            <person name="Boore J.L."/>
            <person name="Jansen R.K."/>
        </authorList>
    </citation>
    <scope>NUCLEOTIDE SEQUENCE [LARGE SCALE GENOMIC DNA]</scope>
</reference>
<name>PSBI_RANMC</name>
<organism>
    <name type="scientific">Ranunculus macranthus</name>
    <name type="common">Large buttercup</name>
    <dbReference type="NCBI Taxonomy" id="334596"/>
    <lineage>
        <taxon>Eukaryota</taxon>
        <taxon>Viridiplantae</taxon>
        <taxon>Streptophyta</taxon>
        <taxon>Embryophyta</taxon>
        <taxon>Tracheophyta</taxon>
        <taxon>Spermatophyta</taxon>
        <taxon>Magnoliopsida</taxon>
        <taxon>Ranunculales</taxon>
        <taxon>Ranunculaceae</taxon>
        <taxon>Ranunculoideae</taxon>
        <taxon>Ranunculeae</taxon>
        <taxon>Ranunculus</taxon>
    </lineage>
</organism>
<keyword id="KW-0150">Chloroplast</keyword>
<keyword id="KW-0472">Membrane</keyword>
<keyword id="KW-0602">Photosynthesis</keyword>
<keyword id="KW-0604">Photosystem II</keyword>
<keyword id="KW-0934">Plastid</keyword>
<keyword id="KW-0674">Reaction center</keyword>
<keyword id="KW-0793">Thylakoid</keyword>
<keyword id="KW-0812">Transmembrane</keyword>
<keyword id="KW-1133">Transmembrane helix</keyword>
<feature type="chain" id="PRO_0000298328" description="Photosystem II reaction center protein I">
    <location>
        <begin position="1"/>
        <end position="36"/>
    </location>
</feature>
<feature type="transmembrane region" description="Helical" evidence="1">
    <location>
        <begin position="4"/>
        <end position="24"/>
    </location>
</feature>
<dbReference type="EMBL" id="DQ359689">
    <property type="protein sequence ID" value="ABC70740.2"/>
    <property type="molecule type" value="Genomic_DNA"/>
</dbReference>
<dbReference type="RefSeq" id="YP_001004170.2">
    <property type="nucleotide sequence ID" value="NC_008796.1"/>
</dbReference>
<dbReference type="SMR" id="A1XGM2"/>
<dbReference type="GeneID" id="4712162"/>
<dbReference type="GO" id="GO:0009535">
    <property type="term" value="C:chloroplast thylakoid membrane"/>
    <property type="evidence" value="ECO:0007669"/>
    <property type="project" value="UniProtKB-SubCell"/>
</dbReference>
<dbReference type="GO" id="GO:0009539">
    <property type="term" value="C:photosystem II reaction center"/>
    <property type="evidence" value="ECO:0007669"/>
    <property type="project" value="InterPro"/>
</dbReference>
<dbReference type="GO" id="GO:0015979">
    <property type="term" value="P:photosynthesis"/>
    <property type="evidence" value="ECO:0007669"/>
    <property type="project" value="UniProtKB-UniRule"/>
</dbReference>
<dbReference type="HAMAP" id="MF_01316">
    <property type="entry name" value="PSII_PsbI"/>
    <property type="match status" value="1"/>
</dbReference>
<dbReference type="InterPro" id="IPR003686">
    <property type="entry name" value="PSII_PsbI"/>
</dbReference>
<dbReference type="InterPro" id="IPR037271">
    <property type="entry name" value="PSII_PsbI_sf"/>
</dbReference>
<dbReference type="NCBIfam" id="NF002735">
    <property type="entry name" value="PRK02655.1"/>
    <property type="match status" value="1"/>
</dbReference>
<dbReference type="PANTHER" id="PTHR35772">
    <property type="entry name" value="PHOTOSYSTEM II REACTION CENTER PROTEIN I"/>
    <property type="match status" value="1"/>
</dbReference>
<dbReference type="PANTHER" id="PTHR35772:SF1">
    <property type="entry name" value="PHOTOSYSTEM II REACTION CENTER PROTEIN I"/>
    <property type="match status" value="1"/>
</dbReference>
<dbReference type="Pfam" id="PF02532">
    <property type="entry name" value="PsbI"/>
    <property type="match status" value="1"/>
</dbReference>
<dbReference type="SUPFAM" id="SSF161041">
    <property type="entry name" value="Photosystem II reaction center protein I, PsbI"/>
    <property type="match status" value="1"/>
</dbReference>
<sequence length="36" mass="4168">MLTLKLFVYTVVIFFVSLFIFGFLSNDPGRNPGREE</sequence>
<gene>
    <name evidence="1" type="primary">psbI</name>
</gene>
<comment type="function">
    <text evidence="1">One of the components of the core complex of photosystem II (PSII), required for its stability and/or assembly. PSII is a light-driven water:plastoquinone oxidoreductase that uses light energy to abstract electrons from H(2)O, generating O(2) and a proton gradient subsequently used for ATP formation. It consists of a core antenna complex that captures photons, and an electron transfer chain that converts photonic excitation into a charge separation.</text>
</comment>
<comment type="subunit">
    <text evidence="1">PSII is composed of 1 copy each of membrane proteins PsbA, PsbB, PsbC, PsbD, PsbE, PsbF, PsbH, PsbI, PsbJ, PsbK, PsbL, PsbM, PsbT, PsbX, PsbY, PsbZ, Psb30/Ycf12, at least 3 peripheral proteins of the oxygen-evolving complex and a large number of cofactors. It forms dimeric complexes.</text>
</comment>
<comment type="subcellular location">
    <subcellularLocation>
        <location evidence="1">Plastid</location>
        <location evidence="1">Chloroplast thylakoid membrane</location>
        <topology evidence="1">Single-pass membrane protein</topology>
    </subcellularLocation>
</comment>
<comment type="similarity">
    <text evidence="1">Belongs to the PsbI family.</text>
</comment>
<evidence type="ECO:0000255" key="1">
    <source>
        <dbReference type="HAMAP-Rule" id="MF_01316"/>
    </source>
</evidence>
<protein>
    <recommendedName>
        <fullName evidence="1">Photosystem II reaction center protein I</fullName>
        <shortName evidence="1">PSII-I</shortName>
    </recommendedName>
    <alternativeName>
        <fullName evidence="1">PSII 4.8 kDa protein</fullName>
    </alternativeName>
</protein>
<accession>A1XGM2</accession>
<proteinExistence type="inferred from homology"/>
<geneLocation type="chloroplast"/>